<feature type="peptide" id="PRO_0000043666" description="CalliFMRFamide-4">
    <location>
        <begin position="1"/>
        <end position="9"/>
    </location>
</feature>
<feature type="modified residue" description="Phenylalanine amide" evidence="1">
    <location>
        <position position="9"/>
    </location>
</feature>
<proteinExistence type="evidence at protein level"/>
<comment type="subcellular location">
    <subcellularLocation>
        <location>Secreted</location>
    </subcellularLocation>
</comment>
<comment type="similarity">
    <text evidence="2">Belongs to the FARP (FMRFamide related peptide) family.</text>
</comment>
<name>FAR4_CALVO</name>
<dbReference type="PIR" id="D41978">
    <property type="entry name" value="D41978"/>
</dbReference>
<dbReference type="GO" id="GO:0005576">
    <property type="term" value="C:extracellular region"/>
    <property type="evidence" value="ECO:0007669"/>
    <property type="project" value="UniProtKB-SubCell"/>
</dbReference>
<dbReference type="GO" id="GO:0007218">
    <property type="term" value="P:neuropeptide signaling pathway"/>
    <property type="evidence" value="ECO:0007669"/>
    <property type="project" value="UniProtKB-KW"/>
</dbReference>
<protein>
    <recommendedName>
        <fullName>CalliFMRFamide-4</fullName>
    </recommendedName>
</protein>
<keyword id="KW-0027">Amidation</keyword>
<keyword id="KW-0903">Direct protein sequencing</keyword>
<keyword id="KW-0527">Neuropeptide</keyword>
<keyword id="KW-0964">Secreted</keyword>
<sequence>KPNQDFMRF</sequence>
<accession>P41859</accession>
<organism>
    <name type="scientific">Calliphora vomitoria</name>
    <name type="common">Blue bottle fly</name>
    <name type="synonym">Musca vomitoria</name>
    <dbReference type="NCBI Taxonomy" id="27454"/>
    <lineage>
        <taxon>Eukaryota</taxon>
        <taxon>Metazoa</taxon>
        <taxon>Ecdysozoa</taxon>
        <taxon>Arthropoda</taxon>
        <taxon>Hexapoda</taxon>
        <taxon>Insecta</taxon>
        <taxon>Pterygota</taxon>
        <taxon>Neoptera</taxon>
        <taxon>Endopterygota</taxon>
        <taxon>Diptera</taxon>
        <taxon>Brachycera</taxon>
        <taxon>Muscomorpha</taxon>
        <taxon>Oestroidea</taxon>
        <taxon>Calliphoridae</taxon>
        <taxon>Calliphorinae</taxon>
        <taxon>Calliphora</taxon>
    </lineage>
</organism>
<evidence type="ECO:0000269" key="1">
    <source>
    </source>
</evidence>
<evidence type="ECO:0000305" key="2"/>
<reference key="1">
    <citation type="journal article" date="1992" name="Proc. Natl. Acad. Sci. U.S.A.">
        <title>Isolation, structure, and activity of -Phe-Met-Arg-Phe-NH2 neuropeptides (designated calliFMRFamides) from the blowfly Calliphora vomitoria.</title>
        <authorList>
            <person name="Duve H."/>
            <person name="Johnsen A.H."/>
            <person name="Sewell J.C."/>
            <person name="Scott A.G."/>
            <person name="Orchard I."/>
            <person name="Rehfeld J.F."/>
            <person name="Thorpe A."/>
        </authorList>
    </citation>
    <scope>PROTEIN SEQUENCE</scope>
    <scope>AMIDATION AT PHE-9</scope>
    <source>
        <tissue>Thoracic ganglion</tissue>
    </source>
</reference>